<name>VITH1_ARATH</name>
<organism>
    <name type="scientific">Arabidopsis thaliana</name>
    <name type="common">Mouse-ear cress</name>
    <dbReference type="NCBI Taxonomy" id="3702"/>
    <lineage>
        <taxon>Eukaryota</taxon>
        <taxon>Viridiplantae</taxon>
        <taxon>Streptophyta</taxon>
        <taxon>Embryophyta</taxon>
        <taxon>Tracheophyta</taxon>
        <taxon>Spermatophyta</taxon>
        <taxon>Magnoliopsida</taxon>
        <taxon>eudicotyledons</taxon>
        <taxon>Gunneridae</taxon>
        <taxon>Pentapetalae</taxon>
        <taxon>rosids</taxon>
        <taxon>malvids</taxon>
        <taxon>Brassicales</taxon>
        <taxon>Brassicaceae</taxon>
        <taxon>Camelineae</taxon>
        <taxon>Arabidopsis</taxon>
    </lineage>
</organism>
<comment type="function">
    <text evidence="4">Vacuolar iron transporter involved in the transfer of iron ions from the cytosol to the vacuole for intracellular iron storage (PubMed:25360591). Involved in regulation of cellular iron homeostasis (PubMed:25360591). Vacuolar iron storage is required for seed embryo and seedling development (PubMed:25360591).</text>
</comment>
<comment type="catalytic activity">
    <reaction evidence="4">
        <text>Fe(2+)(in) = Fe(2+)(out)</text>
        <dbReference type="Rhea" id="RHEA:28486"/>
        <dbReference type="ChEBI" id="CHEBI:29033"/>
    </reaction>
    <physiologicalReaction direction="left-to-right" evidence="7">
        <dbReference type="Rhea" id="RHEA:28487"/>
    </physiologicalReaction>
</comment>
<comment type="subcellular location">
    <subcellularLocation>
        <location evidence="4">Vacuole membrane</location>
        <topology evidence="1">Multi-pass membrane protein</topology>
    </subcellularLocation>
</comment>
<comment type="tissue specificity">
    <text evidence="2 3">Expressed in the vascular bundles of the shoot and the stele of the root. Expressed in inflorescences and at lower levels in leaves.</text>
</comment>
<comment type="induction">
    <text evidence="3 4">Down-regulated under iron deficiency (PubMed:21411332, PubMed:25360591). Induced by iron supply (PubMed:25360591).</text>
</comment>
<comment type="miscellaneous">
    <text evidence="4">Can mediate sequestration of iron ions into vacuoles when expressed in the yeast ccc1 mutant.</text>
</comment>
<comment type="similarity">
    <text evidence="7">Belongs to the CCC1 family.</text>
</comment>
<sequence>MESHNVSNSLNLDMEMDQEKAFDYSKRAQWLRAAVLGANDGLVSTASLMMGVGAVKQDVKVMILSGFAGLVAGACSMAIGEFVSVYSQYDIEVAQMKRENGGQVEKEKLPSPMQAAAASALAFSLGAIVPLMAAAFVKDYHVRIGAIVAAVTLALVMFGWLGAVLGKAPVFKSSARVLIGGWLAMAVTFGLTKLIGTHSL</sequence>
<proteinExistence type="evidence at transcript level"/>
<evidence type="ECO:0000255" key="1"/>
<evidence type="ECO:0000269" key="2">
    <source>
    </source>
</evidence>
<evidence type="ECO:0000269" key="3">
    <source>
    </source>
</evidence>
<evidence type="ECO:0000269" key="4">
    <source>
    </source>
</evidence>
<evidence type="ECO:0000303" key="5">
    <source>
    </source>
</evidence>
<evidence type="ECO:0000303" key="6">
    <source>
    </source>
</evidence>
<evidence type="ECO:0000305" key="7"/>
<evidence type="ECO:0000312" key="8">
    <source>
        <dbReference type="Araport" id="AT1G21140"/>
    </source>
</evidence>
<evidence type="ECO:0000312" key="9">
    <source>
        <dbReference type="EMBL" id="AAF80647.1"/>
    </source>
</evidence>
<reference key="1">
    <citation type="journal article" date="2000" name="Nature">
        <title>Sequence and analysis of chromosome 1 of the plant Arabidopsis thaliana.</title>
        <authorList>
            <person name="Theologis A."/>
            <person name="Ecker J.R."/>
            <person name="Palm C.J."/>
            <person name="Federspiel N.A."/>
            <person name="Kaul S."/>
            <person name="White O."/>
            <person name="Alonso J."/>
            <person name="Altafi H."/>
            <person name="Araujo R."/>
            <person name="Bowman C.L."/>
            <person name="Brooks S.Y."/>
            <person name="Buehler E."/>
            <person name="Chan A."/>
            <person name="Chao Q."/>
            <person name="Chen H."/>
            <person name="Cheuk R.F."/>
            <person name="Chin C.W."/>
            <person name="Chung M.K."/>
            <person name="Conn L."/>
            <person name="Conway A.B."/>
            <person name="Conway A.R."/>
            <person name="Creasy T.H."/>
            <person name="Dewar K."/>
            <person name="Dunn P."/>
            <person name="Etgu P."/>
            <person name="Feldblyum T.V."/>
            <person name="Feng J.-D."/>
            <person name="Fong B."/>
            <person name="Fujii C.Y."/>
            <person name="Gill J.E."/>
            <person name="Goldsmith A.D."/>
            <person name="Haas B."/>
            <person name="Hansen N.F."/>
            <person name="Hughes B."/>
            <person name="Huizar L."/>
            <person name="Hunter J.L."/>
            <person name="Jenkins J."/>
            <person name="Johnson-Hopson C."/>
            <person name="Khan S."/>
            <person name="Khaykin E."/>
            <person name="Kim C.J."/>
            <person name="Koo H.L."/>
            <person name="Kremenetskaia I."/>
            <person name="Kurtz D.B."/>
            <person name="Kwan A."/>
            <person name="Lam B."/>
            <person name="Langin-Hooper S."/>
            <person name="Lee A."/>
            <person name="Lee J.M."/>
            <person name="Lenz C.A."/>
            <person name="Li J.H."/>
            <person name="Li Y.-P."/>
            <person name="Lin X."/>
            <person name="Liu S.X."/>
            <person name="Liu Z.A."/>
            <person name="Luros J.S."/>
            <person name="Maiti R."/>
            <person name="Marziali A."/>
            <person name="Militscher J."/>
            <person name="Miranda M."/>
            <person name="Nguyen M."/>
            <person name="Nierman W.C."/>
            <person name="Osborne B.I."/>
            <person name="Pai G."/>
            <person name="Peterson J."/>
            <person name="Pham P.K."/>
            <person name="Rizzo M."/>
            <person name="Rooney T."/>
            <person name="Rowley D."/>
            <person name="Sakano H."/>
            <person name="Salzberg S.L."/>
            <person name="Schwartz J.R."/>
            <person name="Shinn P."/>
            <person name="Southwick A.M."/>
            <person name="Sun H."/>
            <person name="Tallon L.J."/>
            <person name="Tambunga G."/>
            <person name="Toriumi M.J."/>
            <person name="Town C.D."/>
            <person name="Utterback T."/>
            <person name="Van Aken S."/>
            <person name="Vaysberg M."/>
            <person name="Vysotskaia V.S."/>
            <person name="Walker M."/>
            <person name="Wu D."/>
            <person name="Yu G."/>
            <person name="Fraser C.M."/>
            <person name="Venter J.C."/>
            <person name="Davis R.W."/>
        </authorList>
    </citation>
    <scope>NUCLEOTIDE SEQUENCE [LARGE SCALE GENOMIC DNA]</scope>
    <source>
        <strain>cv. Columbia</strain>
    </source>
</reference>
<reference key="2">
    <citation type="journal article" date="2017" name="Plant J.">
        <title>Araport11: a complete reannotation of the Arabidopsis thaliana reference genome.</title>
        <authorList>
            <person name="Cheng C.Y."/>
            <person name="Krishnakumar V."/>
            <person name="Chan A.P."/>
            <person name="Thibaud-Nissen F."/>
            <person name="Schobel S."/>
            <person name="Town C.D."/>
        </authorList>
    </citation>
    <scope>GENOME REANNOTATION</scope>
    <source>
        <strain>cv. Columbia</strain>
    </source>
</reference>
<reference key="3">
    <citation type="journal article" date="2003" name="Science">
        <title>Empirical analysis of transcriptional activity in the Arabidopsis genome.</title>
        <authorList>
            <person name="Yamada K."/>
            <person name="Lim J."/>
            <person name="Dale J.M."/>
            <person name="Chen H."/>
            <person name="Shinn P."/>
            <person name="Palm C.J."/>
            <person name="Southwick A.M."/>
            <person name="Wu H.C."/>
            <person name="Kim C.J."/>
            <person name="Nguyen M."/>
            <person name="Pham P.K."/>
            <person name="Cheuk R.F."/>
            <person name="Karlin-Newmann G."/>
            <person name="Liu S.X."/>
            <person name="Lam B."/>
            <person name="Sakano H."/>
            <person name="Wu T."/>
            <person name="Yu G."/>
            <person name="Miranda M."/>
            <person name="Quach H.L."/>
            <person name="Tripp M."/>
            <person name="Chang C.H."/>
            <person name="Lee J.M."/>
            <person name="Toriumi M.J."/>
            <person name="Chan M.M."/>
            <person name="Tang C.C."/>
            <person name="Onodera C.S."/>
            <person name="Deng J.M."/>
            <person name="Akiyama K."/>
            <person name="Ansari Y."/>
            <person name="Arakawa T."/>
            <person name="Banh J."/>
            <person name="Banno F."/>
            <person name="Bowser L."/>
            <person name="Brooks S.Y."/>
            <person name="Carninci P."/>
            <person name="Chao Q."/>
            <person name="Choy N."/>
            <person name="Enju A."/>
            <person name="Goldsmith A.D."/>
            <person name="Gurjal M."/>
            <person name="Hansen N.F."/>
            <person name="Hayashizaki Y."/>
            <person name="Johnson-Hopson C."/>
            <person name="Hsuan V.W."/>
            <person name="Iida K."/>
            <person name="Karnes M."/>
            <person name="Khan S."/>
            <person name="Koesema E."/>
            <person name="Ishida J."/>
            <person name="Jiang P.X."/>
            <person name="Jones T."/>
            <person name="Kawai J."/>
            <person name="Kamiya A."/>
            <person name="Meyers C."/>
            <person name="Nakajima M."/>
            <person name="Narusaka M."/>
            <person name="Seki M."/>
            <person name="Sakurai T."/>
            <person name="Satou M."/>
            <person name="Tamse R."/>
            <person name="Vaysberg M."/>
            <person name="Wallender E.K."/>
            <person name="Wong C."/>
            <person name="Yamamura Y."/>
            <person name="Yuan S."/>
            <person name="Shinozaki K."/>
            <person name="Davis R.W."/>
            <person name="Theologis A."/>
            <person name="Ecker J.R."/>
        </authorList>
    </citation>
    <scope>NUCLEOTIDE SEQUENCE [LARGE SCALE MRNA]</scope>
    <source>
        <strain>cv. Columbia</strain>
    </source>
</reference>
<reference key="4">
    <citation type="journal article" date="2006" name="Genetics">
        <title>An Arabidopsis basic helix-loop-helix leucine zipper protein modulates metal homeostasis and auxin conjugate responsiveness.</title>
        <authorList>
            <person name="Rampey R.A."/>
            <person name="Woodward A.W."/>
            <person name="Hobbs B.N."/>
            <person name="Tierney M.P."/>
            <person name="Lahner B."/>
            <person name="Salt D.E."/>
            <person name="Bartel B."/>
        </authorList>
    </citation>
    <scope>TISSUE SPECIFICITY</scope>
</reference>
<reference key="5">
    <citation type="journal article" date="2011" name="Plant Physiol. Biochem.">
        <title>Members of a small family of nodulin-like genes are regulated under iron deficiency in roots of Arabidopsis thaliana.</title>
        <authorList>
            <person name="Gollhofer J."/>
            <person name="Schlaewicke C."/>
            <person name="Jungnick N."/>
            <person name="Schmidt W."/>
            <person name="Buckhout T.J."/>
        </authorList>
    </citation>
    <scope>TISSUE SPECIFICITY</scope>
    <scope>INDUCTION</scope>
</reference>
<reference key="6">
    <citation type="journal article" date="2014" name="PLoS ONE">
        <title>Vacuolar-Iron-Transporter1-Like proteins mediate iron homeostasis in Arabidopsis.</title>
        <authorList>
            <person name="Gollhofer J."/>
            <person name="Timofeev R."/>
            <person name="Lan P."/>
            <person name="Schmidt W."/>
            <person name="Buckhout T.J."/>
        </authorList>
    </citation>
    <scope>FUNCTION</scope>
    <scope>TRANSPORTER ACTIVITY</scope>
    <scope>SUBCELLULAR LOCATION</scope>
    <scope>INDUCTION</scope>
</reference>
<protein>
    <recommendedName>
        <fullName evidence="7">Vacuolar iron transporter homolog 1</fullName>
    </recommendedName>
    <alternativeName>
        <fullName evidence="5">Protein NODULIN-LIKE 1</fullName>
    </alternativeName>
    <alternativeName>
        <fullName evidence="6">Vacuolar iron transporter-like 1</fullName>
        <shortName evidence="6">AtVTL1</shortName>
    </alternativeName>
</protein>
<feature type="chain" id="PRO_0000411007" description="Vacuolar iron transporter homolog 1">
    <location>
        <begin position="1"/>
        <end position="200"/>
    </location>
</feature>
<feature type="topological domain" description="Cytoplasmic" evidence="1">
    <location>
        <begin position="1"/>
        <end position="34"/>
    </location>
</feature>
<feature type="transmembrane region" description="Helical" evidence="1">
    <location>
        <begin position="35"/>
        <end position="55"/>
    </location>
</feature>
<feature type="topological domain" description="Vacuolar" evidence="1">
    <location>
        <begin position="56"/>
        <end position="62"/>
    </location>
</feature>
<feature type="transmembrane region" description="Helical" evidence="1">
    <location>
        <begin position="63"/>
        <end position="83"/>
    </location>
</feature>
<feature type="topological domain" description="Cytoplasmic" evidence="1">
    <location>
        <begin position="84"/>
        <end position="116"/>
    </location>
</feature>
<feature type="transmembrane region" description="Helical" evidence="1">
    <location>
        <begin position="117"/>
        <end position="137"/>
    </location>
</feature>
<feature type="topological domain" description="Vacuolar" evidence="1">
    <location>
        <begin position="138"/>
        <end position="143"/>
    </location>
</feature>
<feature type="transmembrane region" description="Helical" evidence="1">
    <location>
        <begin position="144"/>
        <end position="164"/>
    </location>
</feature>
<feature type="topological domain" description="Cytoplasmic" evidence="1">
    <location>
        <begin position="165"/>
        <end position="176"/>
    </location>
</feature>
<feature type="transmembrane region" description="Helical" evidence="1">
    <location>
        <begin position="177"/>
        <end position="197"/>
    </location>
</feature>
<feature type="topological domain" description="Vacuolar" evidence="1">
    <location>
        <begin position="198"/>
        <end position="200"/>
    </location>
</feature>
<dbReference type="EMBL" id="AC012190">
    <property type="protein sequence ID" value="AAF80647.1"/>
    <property type="molecule type" value="Genomic_DNA"/>
</dbReference>
<dbReference type="EMBL" id="CP002684">
    <property type="protein sequence ID" value="AEE30069.1"/>
    <property type="molecule type" value="Genomic_DNA"/>
</dbReference>
<dbReference type="EMBL" id="BT003829">
    <property type="protein sequence ID" value="AAO41881.1"/>
    <property type="molecule type" value="mRNA"/>
</dbReference>
<dbReference type="EMBL" id="BT005130">
    <property type="protein sequence ID" value="AAO50663.1"/>
    <property type="molecule type" value="mRNA"/>
</dbReference>
<dbReference type="PIR" id="F86344">
    <property type="entry name" value="F86344"/>
</dbReference>
<dbReference type="RefSeq" id="NP_173538.2">
    <property type="nucleotide sequence ID" value="NM_101968.3"/>
</dbReference>
<dbReference type="SMR" id="Q9LPU9"/>
<dbReference type="BioGRID" id="23949">
    <property type="interactions" value="1"/>
</dbReference>
<dbReference type="IntAct" id="Q9LPU9">
    <property type="interactions" value="1"/>
</dbReference>
<dbReference type="STRING" id="3702.Q9LPU9"/>
<dbReference type="TCDB" id="2.A.89.3.3">
    <property type="family name" value="the vacuolar iron transporter (vit) family"/>
</dbReference>
<dbReference type="PaxDb" id="3702-AT1G21140.1"/>
<dbReference type="ProteomicsDB" id="242665"/>
<dbReference type="EnsemblPlants" id="AT1G21140.1">
    <property type="protein sequence ID" value="AT1G21140.1"/>
    <property type="gene ID" value="AT1G21140"/>
</dbReference>
<dbReference type="GeneID" id="838710"/>
<dbReference type="Gramene" id="AT1G21140.1">
    <property type="protein sequence ID" value="AT1G21140.1"/>
    <property type="gene ID" value="AT1G21140"/>
</dbReference>
<dbReference type="KEGG" id="ath:AT1G21140"/>
<dbReference type="Araport" id="AT1G21140"/>
<dbReference type="TAIR" id="AT1G21140">
    <property type="gene designation" value="VTL1"/>
</dbReference>
<dbReference type="eggNOG" id="KOG4473">
    <property type="taxonomic scope" value="Eukaryota"/>
</dbReference>
<dbReference type="HOGENOM" id="CLU_038957_5_0_1"/>
<dbReference type="InParanoid" id="Q9LPU9"/>
<dbReference type="OMA" id="PIKNAMI"/>
<dbReference type="PhylomeDB" id="Q9LPU9"/>
<dbReference type="PRO" id="PR:Q9LPU9"/>
<dbReference type="Proteomes" id="UP000006548">
    <property type="component" value="Chromosome 1"/>
</dbReference>
<dbReference type="ExpressionAtlas" id="Q9LPU9">
    <property type="expression patterns" value="baseline and differential"/>
</dbReference>
<dbReference type="GO" id="GO:0005774">
    <property type="term" value="C:vacuolar membrane"/>
    <property type="evidence" value="ECO:0000314"/>
    <property type="project" value="UniProtKB"/>
</dbReference>
<dbReference type="GO" id="GO:0005381">
    <property type="term" value="F:iron ion transmembrane transporter activity"/>
    <property type="evidence" value="ECO:0000315"/>
    <property type="project" value="UniProtKB"/>
</dbReference>
<dbReference type="GO" id="GO:0005384">
    <property type="term" value="F:manganese ion transmembrane transporter activity"/>
    <property type="evidence" value="ECO:0007669"/>
    <property type="project" value="InterPro"/>
</dbReference>
<dbReference type="GO" id="GO:0006879">
    <property type="term" value="P:intracellular iron ion homeostasis"/>
    <property type="evidence" value="ECO:0000314"/>
    <property type="project" value="UniProtKB"/>
</dbReference>
<dbReference type="GO" id="GO:0030026">
    <property type="term" value="P:intracellular manganese ion homeostasis"/>
    <property type="evidence" value="ECO:0007669"/>
    <property type="project" value="InterPro"/>
</dbReference>
<dbReference type="GO" id="GO:0010039">
    <property type="term" value="P:response to iron ion"/>
    <property type="evidence" value="ECO:0000270"/>
    <property type="project" value="TAIR"/>
</dbReference>
<dbReference type="InterPro" id="IPR008217">
    <property type="entry name" value="Ccc1_fam"/>
</dbReference>
<dbReference type="PANTHER" id="PTHR31851">
    <property type="entry name" value="FE(2+)/MN(2+) TRANSPORTER PCL1"/>
    <property type="match status" value="1"/>
</dbReference>
<dbReference type="Pfam" id="PF01988">
    <property type="entry name" value="VIT1"/>
    <property type="match status" value="2"/>
</dbReference>
<gene>
    <name evidence="6" type="primary">VTL1</name>
</gene>
<gene>
    <name evidence="8" type="ordered locus">At1g21140</name>
    <name evidence="9" type="ORF">T22I11.3</name>
</gene>
<keyword id="KW-0406">Ion transport</keyword>
<keyword id="KW-0408">Iron</keyword>
<keyword id="KW-0410">Iron transport</keyword>
<keyword id="KW-0472">Membrane</keyword>
<keyword id="KW-1185">Reference proteome</keyword>
<keyword id="KW-0812">Transmembrane</keyword>
<keyword id="KW-1133">Transmembrane helix</keyword>
<keyword id="KW-0813">Transport</keyword>
<keyword id="KW-0926">Vacuole</keyword>
<accession>Q9LPU9</accession>